<gene>
    <name evidence="1" type="primary">pyrF</name>
    <name type="ordered locus">GM21_1335</name>
</gene>
<reference key="1">
    <citation type="submission" date="2009-07" db="EMBL/GenBank/DDBJ databases">
        <title>Complete sequence of Geobacter sp. M21.</title>
        <authorList>
            <consortium name="US DOE Joint Genome Institute"/>
            <person name="Lucas S."/>
            <person name="Copeland A."/>
            <person name="Lapidus A."/>
            <person name="Glavina del Rio T."/>
            <person name="Dalin E."/>
            <person name="Tice H."/>
            <person name="Bruce D."/>
            <person name="Goodwin L."/>
            <person name="Pitluck S."/>
            <person name="Saunders E."/>
            <person name="Brettin T."/>
            <person name="Detter J.C."/>
            <person name="Han C."/>
            <person name="Larimer F."/>
            <person name="Land M."/>
            <person name="Hauser L."/>
            <person name="Kyrpides N."/>
            <person name="Ovchinnikova G."/>
            <person name="Lovley D."/>
        </authorList>
    </citation>
    <scope>NUCLEOTIDE SEQUENCE [LARGE SCALE GENOMIC DNA]</scope>
    <source>
        <strain>M21</strain>
    </source>
</reference>
<proteinExistence type="inferred from homology"/>
<dbReference type="EC" id="4.1.1.23" evidence="1"/>
<dbReference type="EMBL" id="CP001661">
    <property type="protein sequence ID" value="ACT17395.1"/>
    <property type="molecule type" value="Genomic_DNA"/>
</dbReference>
<dbReference type="SMR" id="C6E497"/>
<dbReference type="STRING" id="443144.GM21_1335"/>
<dbReference type="KEGG" id="gem:GM21_1335"/>
<dbReference type="eggNOG" id="COG0284">
    <property type="taxonomic scope" value="Bacteria"/>
</dbReference>
<dbReference type="HOGENOM" id="CLU_067069_0_0_7"/>
<dbReference type="OrthoDB" id="9806203at2"/>
<dbReference type="UniPathway" id="UPA00070">
    <property type="reaction ID" value="UER00120"/>
</dbReference>
<dbReference type="GO" id="GO:0005829">
    <property type="term" value="C:cytosol"/>
    <property type="evidence" value="ECO:0007669"/>
    <property type="project" value="TreeGrafter"/>
</dbReference>
<dbReference type="GO" id="GO:0004590">
    <property type="term" value="F:orotidine-5'-phosphate decarboxylase activity"/>
    <property type="evidence" value="ECO:0007669"/>
    <property type="project" value="UniProtKB-UniRule"/>
</dbReference>
<dbReference type="GO" id="GO:0006207">
    <property type="term" value="P:'de novo' pyrimidine nucleobase biosynthetic process"/>
    <property type="evidence" value="ECO:0007669"/>
    <property type="project" value="InterPro"/>
</dbReference>
<dbReference type="GO" id="GO:0044205">
    <property type="term" value="P:'de novo' UMP biosynthetic process"/>
    <property type="evidence" value="ECO:0007669"/>
    <property type="project" value="UniProtKB-UniRule"/>
</dbReference>
<dbReference type="CDD" id="cd04725">
    <property type="entry name" value="OMP_decarboxylase_like"/>
    <property type="match status" value="1"/>
</dbReference>
<dbReference type="FunFam" id="3.20.20.70:FF:000015">
    <property type="entry name" value="Orotidine 5'-phosphate decarboxylase"/>
    <property type="match status" value="1"/>
</dbReference>
<dbReference type="Gene3D" id="3.20.20.70">
    <property type="entry name" value="Aldolase class I"/>
    <property type="match status" value="1"/>
</dbReference>
<dbReference type="HAMAP" id="MF_01200_B">
    <property type="entry name" value="OMPdecase_type1_B"/>
    <property type="match status" value="1"/>
</dbReference>
<dbReference type="InterPro" id="IPR013785">
    <property type="entry name" value="Aldolase_TIM"/>
</dbReference>
<dbReference type="InterPro" id="IPR014732">
    <property type="entry name" value="OMPdecase"/>
</dbReference>
<dbReference type="InterPro" id="IPR018089">
    <property type="entry name" value="OMPdecase_AS"/>
</dbReference>
<dbReference type="InterPro" id="IPR047596">
    <property type="entry name" value="OMPdecase_bac"/>
</dbReference>
<dbReference type="InterPro" id="IPR001754">
    <property type="entry name" value="OMPdeCOase_dom"/>
</dbReference>
<dbReference type="InterPro" id="IPR011060">
    <property type="entry name" value="RibuloseP-bd_barrel"/>
</dbReference>
<dbReference type="NCBIfam" id="NF001273">
    <property type="entry name" value="PRK00230.1"/>
    <property type="match status" value="1"/>
</dbReference>
<dbReference type="NCBIfam" id="TIGR01740">
    <property type="entry name" value="pyrF"/>
    <property type="match status" value="1"/>
</dbReference>
<dbReference type="PANTHER" id="PTHR32119">
    <property type="entry name" value="OROTIDINE 5'-PHOSPHATE DECARBOXYLASE"/>
    <property type="match status" value="1"/>
</dbReference>
<dbReference type="PANTHER" id="PTHR32119:SF2">
    <property type="entry name" value="OROTIDINE 5'-PHOSPHATE DECARBOXYLASE"/>
    <property type="match status" value="1"/>
</dbReference>
<dbReference type="Pfam" id="PF00215">
    <property type="entry name" value="OMPdecase"/>
    <property type="match status" value="1"/>
</dbReference>
<dbReference type="SMART" id="SM00934">
    <property type="entry name" value="OMPdecase"/>
    <property type="match status" value="1"/>
</dbReference>
<dbReference type="SUPFAM" id="SSF51366">
    <property type="entry name" value="Ribulose-phoshate binding barrel"/>
    <property type="match status" value="1"/>
</dbReference>
<dbReference type="PROSITE" id="PS00156">
    <property type="entry name" value="OMPDECASE"/>
    <property type="match status" value="1"/>
</dbReference>
<organism>
    <name type="scientific">Geobacter sp. (strain M21)</name>
    <dbReference type="NCBI Taxonomy" id="443144"/>
    <lineage>
        <taxon>Bacteria</taxon>
        <taxon>Pseudomonadati</taxon>
        <taxon>Thermodesulfobacteriota</taxon>
        <taxon>Desulfuromonadia</taxon>
        <taxon>Geobacterales</taxon>
        <taxon>Geobacteraceae</taxon>
        <taxon>Geobacter</taxon>
    </lineage>
</organism>
<comment type="function">
    <text evidence="1">Catalyzes the decarboxylation of orotidine 5'-monophosphate (OMP) to uridine 5'-monophosphate (UMP).</text>
</comment>
<comment type="catalytic activity">
    <reaction evidence="1">
        <text>orotidine 5'-phosphate + H(+) = UMP + CO2</text>
        <dbReference type="Rhea" id="RHEA:11596"/>
        <dbReference type="ChEBI" id="CHEBI:15378"/>
        <dbReference type="ChEBI" id="CHEBI:16526"/>
        <dbReference type="ChEBI" id="CHEBI:57538"/>
        <dbReference type="ChEBI" id="CHEBI:57865"/>
        <dbReference type="EC" id="4.1.1.23"/>
    </reaction>
</comment>
<comment type="pathway">
    <text evidence="1">Pyrimidine metabolism; UMP biosynthesis via de novo pathway; UMP from orotate: step 2/2.</text>
</comment>
<comment type="subunit">
    <text evidence="1">Homodimer.</text>
</comment>
<comment type="similarity">
    <text evidence="1">Belongs to the OMP decarboxylase family. Type 1 subfamily.</text>
</comment>
<sequence>MTREEAIKKIIFAMDVKEFSDVQYWAELLSQHVGMFKVGKQLYTACGPAAVRMIQKCGGEVFLDLKYHDIPNTVAMATLEAANLGVQLCDLHAMGGYEMMNKTMEALDKNFSGCTPRPKVLAITVLTSSNEETLRGIGIELPVPEMVVKLAKLAKSAGVDGVVASPQEVELIREACGKDFLVVTPGVRPSFASADDQKRIMTPAEAVKAGADYLVIGRPIAAAQSPVEAAQKIVDEIVAG</sequence>
<keyword id="KW-0210">Decarboxylase</keyword>
<keyword id="KW-0456">Lyase</keyword>
<keyword id="KW-0665">Pyrimidine biosynthesis</keyword>
<name>PYRF_GEOSM</name>
<protein>
    <recommendedName>
        <fullName evidence="1">Orotidine 5'-phosphate decarboxylase</fullName>
        <ecNumber evidence="1">4.1.1.23</ecNumber>
    </recommendedName>
    <alternativeName>
        <fullName evidence="1">OMP decarboxylase</fullName>
        <shortName evidence="1">OMPDCase</shortName>
        <shortName evidence="1">OMPdecase</shortName>
    </alternativeName>
</protein>
<accession>C6E497</accession>
<evidence type="ECO:0000255" key="1">
    <source>
        <dbReference type="HAMAP-Rule" id="MF_01200"/>
    </source>
</evidence>
<feature type="chain" id="PRO_1000213820" description="Orotidine 5'-phosphate decarboxylase">
    <location>
        <begin position="1"/>
        <end position="240"/>
    </location>
</feature>
<feature type="active site" description="Proton donor" evidence="1">
    <location>
        <position position="66"/>
    </location>
</feature>
<feature type="binding site" evidence="1">
    <location>
        <position position="15"/>
    </location>
    <ligand>
        <name>substrate</name>
    </ligand>
</feature>
<feature type="binding site" evidence="1">
    <location>
        <position position="37"/>
    </location>
    <ligand>
        <name>substrate</name>
    </ligand>
</feature>
<feature type="binding site" evidence="1">
    <location>
        <begin position="64"/>
        <end position="73"/>
    </location>
    <ligand>
        <name>substrate</name>
    </ligand>
</feature>
<feature type="binding site" evidence="1">
    <location>
        <position position="127"/>
    </location>
    <ligand>
        <name>substrate</name>
    </ligand>
</feature>
<feature type="binding site" evidence="1">
    <location>
        <position position="188"/>
    </location>
    <ligand>
        <name>substrate</name>
    </ligand>
</feature>
<feature type="binding site" evidence="1">
    <location>
        <position position="197"/>
    </location>
    <ligand>
        <name>substrate</name>
    </ligand>
</feature>
<feature type="binding site" evidence="1">
    <location>
        <position position="217"/>
    </location>
    <ligand>
        <name>substrate</name>
    </ligand>
</feature>
<feature type="binding site" evidence="1">
    <location>
        <position position="218"/>
    </location>
    <ligand>
        <name>substrate</name>
    </ligand>
</feature>